<name>PLSB_MYCLE</name>
<comment type="catalytic activity">
    <reaction>
        <text>sn-glycerol 3-phosphate + an acyl-CoA = a 1-acyl-sn-glycero-3-phosphate + CoA</text>
        <dbReference type="Rhea" id="RHEA:15325"/>
        <dbReference type="ChEBI" id="CHEBI:57287"/>
        <dbReference type="ChEBI" id="CHEBI:57597"/>
        <dbReference type="ChEBI" id="CHEBI:57970"/>
        <dbReference type="ChEBI" id="CHEBI:58342"/>
        <dbReference type="EC" id="2.3.1.15"/>
    </reaction>
</comment>
<comment type="pathway">
    <text>Phospholipid metabolism; CDP-diacylglycerol biosynthesis; CDP-diacylglycerol from sn-glycerol 3-phosphate: step 1/3.</text>
</comment>
<comment type="subcellular location">
    <subcellularLocation>
        <location evidence="1">Cell membrane</location>
        <topology evidence="1">Peripheral membrane protein</topology>
        <orientation evidence="1">Cytoplasmic side</orientation>
    </subcellularLocation>
</comment>
<comment type="domain">
    <text evidence="1">The HXXXXD motif is essential for acyltransferase activity and may constitute the binding site for the phosphate moiety of the glycerol-3-phosphate.</text>
</comment>
<comment type="similarity">
    <text evidence="2">Belongs to the GPAT/DAPAT family.</text>
</comment>
<sequence length="775" mass="87364">MTEPDVEISSVLTGEDTLVLASMDTPAEIELVMDWLCQQRNRNPDIKFDVLKLPSRNLAPAALTALVEQLESDEDRSVVPVRVFWMPPAERSKLAKLAGLLPGRDPYHPNRRQQRHILKTDARRALVIAGDSAKVSELRQYWRDTTVGENECDFAQFVTRRAILAMERAESRILGPQYKSPRLVKPEILASTRFRAGLEKISGATVEEAGKMLDELATGWSRASVDLVSVLGRMLSRGFEPEIDYDEYQVAAMRAALEAHPAVLLFSHRSYIDGAVVPVAMQENRLPPVHVFAGINLSFGLMGPLLRRSGVIFIRRNIGDNPLYKYVLREYVGYIVEKRFNLSWSIEGTRSRTGKMLPPKLGLLTYVADAYLDGRSEDILLQPVSISFDQLHETAEYAAYARGGEKTPEGVAWLYSFIKAQGERNYGKIYVRFPEAVSMRQYLGAPHGALVQDQDAKRLALQKMSFEVAWRILCATPVTATALVSALLLTTRGVALTLDQLHHTLQESLDYLERKQTPVSKSALRLRSREGVRAAVDALSSGHPITRVDSGREPVWYITPGNEHAAAFYRNSVIHAFLETSIVELALAHARHVEGDRMKVFWAQAMRLRDLLKFDFYFADSAAFRANIAEEIAWHQNWEDRVSGDGDDIDAMLLTKRPLISDAMLRVFFEAYDIVADVLRDAPADVGQKELTELALGVGRQYVAQGRVRSGESVSTLLFATAYQVVVDQNLIAPAPDLAERRMVFRRELRDIRRDFDYVEQIARSRFIVREFKSR</sequence>
<keyword id="KW-0012">Acyltransferase</keyword>
<keyword id="KW-1003">Cell membrane</keyword>
<keyword id="KW-0444">Lipid biosynthesis</keyword>
<keyword id="KW-0443">Lipid metabolism</keyword>
<keyword id="KW-0472">Membrane</keyword>
<keyword id="KW-0594">Phospholipid biosynthesis</keyword>
<keyword id="KW-1208">Phospholipid metabolism</keyword>
<keyword id="KW-1185">Reference proteome</keyword>
<keyword id="KW-0808">Transferase</keyword>
<protein>
    <recommendedName>
        <fullName>Glycerol-3-phosphate acyltransferase</fullName>
        <shortName>GPAT</shortName>
        <ecNumber>2.3.1.15</ecNumber>
    </recommendedName>
</protein>
<accession>Q9X7B0</accession>
<feature type="chain" id="PRO_0000195224" description="Glycerol-3-phosphate acyltransferase">
    <location>
        <begin position="1"/>
        <end position="775"/>
    </location>
</feature>
<feature type="short sequence motif" description="HXXXXD motif">
    <location>
        <begin position="268"/>
        <end position="273"/>
    </location>
</feature>
<evidence type="ECO:0000250" key="1"/>
<evidence type="ECO:0000305" key="2"/>
<proteinExistence type="inferred from homology"/>
<reference key="1">
    <citation type="journal article" date="2001" name="Nature">
        <title>Massive gene decay in the leprosy bacillus.</title>
        <authorList>
            <person name="Cole S.T."/>
            <person name="Eiglmeier K."/>
            <person name="Parkhill J."/>
            <person name="James K.D."/>
            <person name="Thomson N.R."/>
            <person name="Wheeler P.R."/>
            <person name="Honore N."/>
            <person name="Garnier T."/>
            <person name="Churcher C.M."/>
            <person name="Harris D.E."/>
            <person name="Mungall K.L."/>
            <person name="Basham D."/>
            <person name="Brown D."/>
            <person name="Chillingworth T."/>
            <person name="Connor R."/>
            <person name="Davies R.M."/>
            <person name="Devlin K."/>
            <person name="Duthoy S."/>
            <person name="Feltwell T."/>
            <person name="Fraser A."/>
            <person name="Hamlin N."/>
            <person name="Holroyd S."/>
            <person name="Hornsby T."/>
            <person name="Jagels K."/>
            <person name="Lacroix C."/>
            <person name="Maclean J."/>
            <person name="Moule S."/>
            <person name="Murphy L.D."/>
            <person name="Oliver K."/>
            <person name="Quail M.A."/>
            <person name="Rajandream M.A."/>
            <person name="Rutherford K.M."/>
            <person name="Rutter S."/>
            <person name="Seeger K."/>
            <person name="Simon S."/>
            <person name="Simmonds M."/>
            <person name="Skelton J."/>
            <person name="Squares R."/>
            <person name="Squares S."/>
            <person name="Stevens K."/>
            <person name="Taylor K."/>
            <person name="Whitehead S."/>
            <person name="Woodward J.R."/>
            <person name="Barrell B.G."/>
        </authorList>
    </citation>
    <scope>NUCLEOTIDE SEQUENCE [LARGE SCALE GENOMIC DNA]</scope>
    <source>
        <strain>TN</strain>
    </source>
</reference>
<dbReference type="EC" id="2.3.1.15"/>
<dbReference type="EMBL" id="AL049913">
    <property type="protein sequence ID" value="CAB43153.1"/>
    <property type="molecule type" value="Genomic_DNA"/>
</dbReference>
<dbReference type="EMBL" id="AL583921">
    <property type="protein sequence ID" value="CAC31627.1"/>
    <property type="molecule type" value="Genomic_DNA"/>
</dbReference>
<dbReference type="PIR" id="T45238">
    <property type="entry name" value="T45238"/>
</dbReference>
<dbReference type="RefSeq" id="NP_301900.1">
    <property type="nucleotide sequence ID" value="NC_002677.1"/>
</dbReference>
<dbReference type="RefSeq" id="WP_010908221.1">
    <property type="nucleotide sequence ID" value="NC_002677.1"/>
</dbReference>
<dbReference type="SMR" id="Q9X7B0"/>
<dbReference type="STRING" id="272631.gene:17575078"/>
<dbReference type="KEGG" id="mle:ML1246"/>
<dbReference type="PATRIC" id="fig|272631.5.peg.2298"/>
<dbReference type="Leproma" id="ML1246"/>
<dbReference type="eggNOG" id="COG2937">
    <property type="taxonomic scope" value="Bacteria"/>
</dbReference>
<dbReference type="HOGENOM" id="CLU_015407_1_0_11"/>
<dbReference type="OrthoDB" id="335193at2"/>
<dbReference type="UniPathway" id="UPA00557">
    <property type="reaction ID" value="UER00612"/>
</dbReference>
<dbReference type="Proteomes" id="UP000000806">
    <property type="component" value="Chromosome"/>
</dbReference>
<dbReference type="GO" id="GO:0005886">
    <property type="term" value="C:plasma membrane"/>
    <property type="evidence" value="ECO:0007669"/>
    <property type="project" value="UniProtKB-SubCell"/>
</dbReference>
<dbReference type="GO" id="GO:0004366">
    <property type="term" value="F:glycerol-3-phosphate O-acyltransferase activity"/>
    <property type="evidence" value="ECO:0007669"/>
    <property type="project" value="UniProtKB-UniRule"/>
</dbReference>
<dbReference type="GO" id="GO:0016024">
    <property type="term" value="P:CDP-diacylglycerol biosynthetic process"/>
    <property type="evidence" value="ECO:0007669"/>
    <property type="project" value="UniProtKB-UniRule"/>
</dbReference>
<dbReference type="CDD" id="cd07993">
    <property type="entry name" value="LPLAT_DHAPAT-like"/>
    <property type="match status" value="1"/>
</dbReference>
<dbReference type="HAMAP" id="MF_00393">
    <property type="entry name" value="Glyc3P_acyltrans"/>
    <property type="match status" value="1"/>
</dbReference>
<dbReference type="InterPro" id="IPR022284">
    <property type="entry name" value="GPAT/DHAPAT"/>
</dbReference>
<dbReference type="InterPro" id="IPR045520">
    <property type="entry name" value="GPAT/DHAPAT_C"/>
</dbReference>
<dbReference type="InterPro" id="IPR041728">
    <property type="entry name" value="GPAT/DHAPAT_LPLAT"/>
</dbReference>
<dbReference type="InterPro" id="IPR028354">
    <property type="entry name" value="GPAT_PlsB"/>
</dbReference>
<dbReference type="InterPro" id="IPR002123">
    <property type="entry name" value="Plipid/glycerol_acylTrfase"/>
</dbReference>
<dbReference type="NCBIfam" id="NF002886">
    <property type="entry name" value="PRK03355.1"/>
    <property type="match status" value="1"/>
</dbReference>
<dbReference type="PANTHER" id="PTHR12563:SF17">
    <property type="entry name" value="DIHYDROXYACETONE PHOSPHATE ACYLTRANSFERASE"/>
    <property type="match status" value="1"/>
</dbReference>
<dbReference type="PANTHER" id="PTHR12563">
    <property type="entry name" value="GLYCEROL-3-PHOSPHATE ACYLTRANSFERASE"/>
    <property type="match status" value="1"/>
</dbReference>
<dbReference type="Pfam" id="PF01553">
    <property type="entry name" value="Acyltransferase"/>
    <property type="match status" value="1"/>
</dbReference>
<dbReference type="Pfam" id="PF19277">
    <property type="entry name" value="GPAT_C"/>
    <property type="match status" value="1"/>
</dbReference>
<dbReference type="PIRSF" id="PIRSF500064">
    <property type="entry name" value="GPAT"/>
    <property type="match status" value="1"/>
</dbReference>
<dbReference type="PIRSF" id="PIRSF000437">
    <property type="entry name" value="GPAT_DHAPAT"/>
    <property type="match status" value="1"/>
</dbReference>
<dbReference type="SMART" id="SM00563">
    <property type="entry name" value="PlsC"/>
    <property type="match status" value="1"/>
</dbReference>
<dbReference type="SUPFAM" id="SSF69593">
    <property type="entry name" value="Glycerol-3-phosphate (1)-acyltransferase"/>
    <property type="match status" value="1"/>
</dbReference>
<gene>
    <name type="primary">plsB</name>
    <name type="ordered locus">ML1246</name>
    <name type="ORF">MLCB1610.07</name>
</gene>
<organism>
    <name type="scientific">Mycobacterium leprae (strain TN)</name>
    <dbReference type="NCBI Taxonomy" id="272631"/>
    <lineage>
        <taxon>Bacteria</taxon>
        <taxon>Bacillati</taxon>
        <taxon>Actinomycetota</taxon>
        <taxon>Actinomycetes</taxon>
        <taxon>Mycobacteriales</taxon>
        <taxon>Mycobacteriaceae</taxon>
        <taxon>Mycobacterium</taxon>
    </lineage>
</organism>